<reference key="1">
    <citation type="submission" date="2004-05" db="EMBL/GenBank/DDBJ databases">
        <authorList>
            <consortium name="NIH - Xenopus Gene Collection (XGC) project"/>
        </authorList>
    </citation>
    <scope>NUCLEOTIDE SEQUENCE [LARGE SCALE MRNA]</scope>
    <source>
        <tissue>Embryo</tissue>
    </source>
</reference>
<reference key="2">
    <citation type="journal article" date="2008" name="Dev. Dyn.">
        <title>Expression cloning in Xenopus identifies RNA-binding proteins as regulators of embryogenesis and Rbmx as necessary for neural and muscle development.</title>
        <authorList>
            <person name="Dichmann D.S."/>
            <person name="Fletcher R.B."/>
            <person name="Harland R.M."/>
        </authorList>
    </citation>
    <scope>FUNCTION</scope>
    <scope>DEVELOPMENTAL STAGE</scope>
</reference>
<proteinExistence type="evidence at transcript level"/>
<gene>
    <name type="primary">rbmx</name>
</gene>
<accession>Q6IRQ4</accession>
<sequence length="370" mass="40299">MVEADRPGKLFIGGLNTETNEKALEAVFCKYGRVVEVLLMKDRETNKSRGFAFVTFESPADAKDAARELNGKALDGKPIKVEQATKPSFSTPSRRGPPTSPRSRGPPRGLRGSRGGGSSRGQMPLKRGPPPRSGGPPPKRSAPSGPLRSSEMGGRAPLSRERDGYGAPPRRDPMPSRRDVYMSPRDDGYSGKDRYDGYSGRDYGSSRDSRDYGPPPRDYSYRDYGHSSSRDDYGSRGYSDRDGYGGRDSRDYSDHQSGGSYRDSYEGYGNSRSAPPARGPPPSYGGSSRYDDYSSTRDGYGGRDSYSSSRNDIYSSGRDRVGRQERGLPPSMDRGYPPPRDSYSSSSRGGPRGGGRGGSRSDRGGGRSRY</sequence>
<dbReference type="EMBL" id="BC070649">
    <property type="protein sequence ID" value="AAH70649.1"/>
    <property type="molecule type" value="mRNA"/>
</dbReference>
<dbReference type="RefSeq" id="NP_001084981.1">
    <property type="nucleotide sequence ID" value="NM_001091512.1"/>
</dbReference>
<dbReference type="SMR" id="Q6IRQ4"/>
<dbReference type="DNASU" id="432041"/>
<dbReference type="AGR" id="Xenbase:XB-GENE-6078824"/>
<dbReference type="Xenbase" id="XB-GENE-6078824">
    <property type="gene designation" value="rbmx.S"/>
</dbReference>
<dbReference type="OMA" id="HEGFFMG"/>
<dbReference type="CD-CODE" id="78E86D56">
    <property type="entry name" value="Mitochondrial cloud"/>
</dbReference>
<dbReference type="Proteomes" id="UP000186698">
    <property type="component" value="Unplaced"/>
</dbReference>
<dbReference type="Bgee" id="432041">
    <property type="expression patterns" value="Expressed in gastrula and 19 other cell types or tissues"/>
</dbReference>
<dbReference type="GO" id="GO:0071013">
    <property type="term" value="C:catalytic step 2 spliceosome"/>
    <property type="evidence" value="ECO:0000250"/>
    <property type="project" value="UniProtKB"/>
</dbReference>
<dbReference type="GO" id="GO:0000791">
    <property type="term" value="C:euchromatin"/>
    <property type="evidence" value="ECO:0000250"/>
    <property type="project" value="UniProtKB"/>
</dbReference>
<dbReference type="GO" id="GO:0070062">
    <property type="term" value="C:extracellular exosome"/>
    <property type="evidence" value="ECO:0000250"/>
    <property type="project" value="UniProtKB"/>
</dbReference>
<dbReference type="GO" id="GO:0005634">
    <property type="term" value="C:nucleus"/>
    <property type="evidence" value="ECO:0000250"/>
    <property type="project" value="UniProtKB"/>
</dbReference>
<dbReference type="GO" id="GO:0005681">
    <property type="term" value="C:spliceosomal complex"/>
    <property type="evidence" value="ECO:0000318"/>
    <property type="project" value="GO_Central"/>
</dbReference>
<dbReference type="GO" id="GO:0044530">
    <property type="term" value="C:supraspliceosomal complex"/>
    <property type="evidence" value="ECO:0000250"/>
    <property type="project" value="UniProtKB"/>
</dbReference>
<dbReference type="GO" id="GO:0003682">
    <property type="term" value="F:chromatin binding"/>
    <property type="evidence" value="ECO:0000250"/>
    <property type="project" value="UniProtKB"/>
</dbReference>
<dbReference type="GO" id="GO:0003729">
    <property type="term" value="F:mRNA binding"/>
    <property type="evidence" value="ECO:0000250"/>
    <property type="project" value="UniProtKB"/>
</dbReference>
<dbReference type="GO" id="GO:0003723">
    <property type="term" value="F:RNA binding"/>
    <property type="evidence" value="ECO:0000250"/>
    <property type="project" value="UniProtKB"/>
</dbReference>
<dbReference type="GO" id="GO:0000978">
    <property type="term" value="F:RNA polymerase II cis-regulatory region sequence-specific DNA binding"/>
    <property type="evidence" value="ECO:0000250"/>
    <property type="project" value="UniProtKB"/>
</dbReference>
<dbReference type="GO" id="GO:0071347">
    <property type="term" value="P:cellular response to interleukin-1"/>
    <property type="evidence" value="ECO:0000250"/>
    <property type="project" value="UniProtKB"/>
</dbReference>
<dbReference type="GO" id="GO:0006509">
    <property type="term" value="P:membrane protein ectodomain proteolysis"/>
    <property type="evidence" value="ECO:0000250"/>
    <property type="project" value="UniProtKB"/>
</dbReference>
<dbReference type="GO" id="GO:0006397">
    <property type="term" value="P:mRNA processing"/>
    <property type="evidence" value="ECO:0007669"/>
    <property type="project" value="UniProtKB-KW"/>
</dbReference>
<dbReference type="GO" id="GO:0048025">
    <property type="term" value="P:negative regulation of mRNA splicing, via spliceosome"/>
    <property type="evidence" value="ECO:0000250"/>
    <property type="project" value="UniProtKB"/>
</dbReference>
<dbReference type="GO" id="GO:0048026">
    <property type="term" value="P:positive regulation of mRNA splicing, via spliceosome"/>
    <property type="evidence" value="ECO:0000250"/>
    <property type="project" value="UniProtKB"/>
</dbReference>
<dbReference type="GO" id="GO:0045944">
    <property type="term" value="P:positive regulation of transcription by RNA polymerase II"/>
    <property type="evidence" value="ECO:0000250"/>
    <property type="project" value="UniProtKB"/>
</dbReference>
<dbReference type="GO" id="GO:0051260">
    <property type="term" value="P:protein homooligomerization"/>
    <property type="evidence" value="ECO:0000250"/>
    <property type="project" value="UniProtKB"/>
</dbReference>
<dbReference type="GO" id="GO:0000381">
    <property type="term" value="P:regulation of alternative mRNA splicing, via spliceosome"/>
    <property type="evidence" value="ECO:0000250"/>
    <property type="project" value="UniProtKB"/>
</dbReference>
<dbReference type="GO" id="GO:0008380">
    <property type="term" value="P:RNA splicing"/>
    <property type="evidence" value="ECO:0007669"/>
    <property type="project" value="UniProtKB-KW"/>
</dbReference>
<dbReference type="GO" id="GO:0006366">
    <property type="term" value="P:transcription by RNA polymerase II"/>
    <property type="evidence" value="ECO:0000250"/>
    <property type="project" value="UniProtKB"/>
</dbReference>
<dbReference type="CDD" id="cd12382">
    <property type="entry name" value="RRM_RBMX_like"/>
    <property type="match status" value="1"/>
</dbReference>
<dbReference type="FunFam" id="3.30.70.330:FF:000119">
    <property type="entry name" value="RNA-binding motif protein, X chromosome"/>
    <property type="match status" value="1"/>
</dbReference>
<dbReference type="Gene3D" id="3.30.70.330">
    <property type="match status" value="1"/>
</dbReference>
<dbReference type="InterPro" id="IPR012677">
    <property type="entry name" value="Nucleotide-bd_a/b_plait_sf"/>
</dbReference>
<dbReference type="InterPro" id="IPR035979">
    <property type="entry name" value="RBD_domain_sf"/>
</dbReference>
<dbReference type="InterPro" id="IPR050441">
    <property type="entry name" value="RBM"/>
</dbReference>
<dbReference type="InterPro" id="IPR012604">
    <property type="entry name" value="RBM1CTR"/>
</dbReference>
<dbReference type="InterPro" id="IPR000504">
    <property type="entry name" value="RRM_dom"/>
</dbReference>
<dbReference type="InterPro" id="IPR003954">
    <property type="entry name" value="RRM_dom_euk"/>
</dbReference>
<dbReference type="PANTHER" id="PTHR48034">
    <property type="entry name" value="TRANSFORMER-2 SEX-DETERMINING PROTEIN-RELATED"/>
    <property type="match status" value="1"/>
</dbReference>
<dbReference type="Pfam" id="PF08081">
    <property type="entry name" value="RBM1CTR"/>
    <property type="match status" value="1"/>
</dbReference>
<dbReference type="Pfam" id="PF00076">
    <property type="entry name" value="RRM_1"/>
    <property type="match status" value="1"/>
</dbReference>
<dbReference type="SMART" id="SM00360">
    <property type="entry name" value="RRM"/>
    <property type="match status" value="1"/>
</dbReference>
<dbReference type="SMART" id="SM00361">
    <property type="entry name" value="RRM_1"/>
    <property type="match status" value="1"/>
</dbReference>
<dbReference type="SUPFAM" id="SSF54928">
    <property type="entry name" value="RNA-binding domain, RBD"/>
    <property type="match status" value="1"/>
</dbReference>
<dbReference type="PROSITE" id="PS50102">
    <property type="entry name" value="RRM"/>
    <property type="match status" value="1"/>
</dbReference>
<feature type="chain" id="PRO_0000413021" description="RNA-binding motif protein, X chromosome">
    <location>
        <begin position="1"/>
        <end position="370"/>
    </location>
</feature>
<feature type="domain" description="RRM" evidence="2">
    <location>
        <begin position="8"/>
        <end position="86"/>
    </location>
</feature>
<feature type="region of interest" description="Disordered" evidence="3">
    <location>
        <begin position="69"/>
        <end position="370"/>
    </location>
</feature>
<feature type="compositionally biased region" description="Basic and acidic residues" evidence="3">
    <location>
        <begin position="69"/>
        <end position="80"/>
    </location>
</feature>
<feature type="compositionally biased region" description="Low complexity" evidence="3">
    <location>
        <begin position="87"/>
        <end position="110"/>
    </location>
</feature>
<feature type="compositionally biased region" description="Pro residues" evidence="3">
    <location>
        <begin position="127"/>
        <end position="140"/>
    </location>
</feature>
<feature type="compositionally biased region" description="Basic and acidic residues" evidence="3">
    <location>
        <begin position="158"/>
        <end position="196"/>
    </location>
</feature>
<feature type="compositionally biased region" description="Basic and acidic residues" evidence="3">
    <location>
        <begin position="219"/>
        <end position="254"/>
    </location>
</feature>
<feature type="compositionally biased region" description="Low complexity" evidence="3">
    <location>
        <begin position="303"/>
        <end position="316"/>
    </location>
</feature>
<feature type="compositionally biased region" description="Basic and acidic residues" evidence="3">
    <location>
        <begin position="317"/>
        <end position="326"/>
    </location>
</feature>
<feature type="compositionally biased region" description="Basic and acidic residues" evidence="3">
    <location>
        <begin position="359"/>
        <end position="370"/>
    </location>
</feature>
<keyword id="KW-0217">Developmental protein</keyword>
<keyword id="KW-0507">mRNA processing</keyword>
<keyword id="KW-0508">mRNA splicing</keyword>
<keyword id="KW-0539">Nucleus</keyword>
<keyword id="KW-1185">Reference proteome</keyword>
<keyword id="KW-0687">Ribonucleoprotein</keyword>
<keyword id="KW-0694">RNA-binding</keyword>
<keyword id="KW-0747">Spliceosome</keyword>
<keyword id="KW-0804">Transcription</keyword>
<organism>
    <name type="scientific">Xenopus laevis</name>
    <name type="common">African clawed frog</name>
    <dbReference type="NCBI Taxonomy" id="8355"/>
    <lineage>
        <taxon>Eukaryota</taxon>
        <taxon>Metazoa</taxon>
        <taxon>Chordata</taxon>
        <taxon>Craniata</taxon>
        <taxon>Vertebrata</taxon>
        <taxon>Euteleostomi</taxon>
        <taxon>Amphibia</taxon>
        <taxon>Batrachia</taxon>
        <taxon>Anura</taxon>
        <taxon>Pipoidea</taxon>
        <taxon>Pipidae</taxon>
        <taxon>Xenopodinae</taxon>
        <taxon>Xenopus</taxon>
        <taxon>Xenopus</taxon>
    </lineage>
</organism>
<name>RBMX_XENLA</name>
<evidence type="ECO:0000250" key="1"/>
<evidence type="ECO:0000255" key="2">
    <source>
        <dbReference type="PROSITE-ProRule" id="PRU00176"/>
    </source>
</evidence>
<evidence type="ECO:0000256" key="3">
    <source>
        <dbReference type="SAM" id="MobiDB-lite"/>
    </source>
</evidence>
<evidence type="ECO:0000269" key="4">
    <source>
    </source>
</evidence>
<comment type="function">
    <text evidence="1 4">RNA-binding protein that plays several role in the regulation of pre- and post-transcriptional processes. Implicated in tissue-specific regulation of gene transcription and alternative splicing of pre-mRNAs. Associates with chromatin. Associates with nascent mRNAs transcribed by RNA polymerase II. Component of the supraspliceosome complex that regulates pre-mRNA alternative splice site selection. Binds non-specifically to pre-mRNAs (By similarity). Required for embryonic development, in particular of the brain.</text>
</comment>
<comment type="subcellular location">
    <subcellularLocation>
        <location evidence="1">Nucleus</location>
    </subcellularLocation>
</comment>
<comment type="developmental stage">
    <text evidence="4">Expressed in the anterior to posterior extent of the neural tube including strong expression in the forebrain in the embryo.</text>
</comment>
<protein>
    <recommendedName>
        <fullName>RNA-binding motif protein, X chromosome</fullName>
    </recommendedName>
    <alternativeName>
        <fullName>Heterogeneous nuclear ribonucleoprotein G</fullName>
        <shortName>hnRNP G</shortName>
    </alternativeName>
</protein>